<evidence type="ECO:0000255" key="1">
    <source>
        <dbReference type="HAMAP-Rule" id="MF_00271"/>
    </source>
</evidence>
<dbReference type="EMBL" id="CP000745">
    <property type="protein sequence ID" value="ABR65370.1"/>
    <property type="molecule type" value="Genomic_DNA"/>
</dbReference>
<dbReference type="SMR" id="A6VFZ4"/>
<dbReference type="STRING" id="426368.MmarC7_0300"/>
<dbReference type="KEGG" id="mmz:MmarC7_0300"/>
<dbReference type="eggNOG" id="arCOG04101">
    <property type="taxonomic scope" value="Archaea"/>
</dbReference>
<dbReference type="HOGENOM" id="CLU_069688_2_1_2"/>
<dbReference type="OrthoDB" id="117390at2157"/>
<dbReference type="GO" id="GO:0005886">
    <property type="term" value="C:plasma membrane"/>
    <property type="evidence" value="ECO:0007669"/>
    <property type="project" value="UniProtKB-SubCell"/>
</dbReference>
<dbReference type="GO" id="GO:0005524">
    <property type="term" value="F:ATP binding"/>
    <property type="evidence" value="ECO:0007669"/>
    <property type="project" value="UniProtKB-UniRule"/>
</dbReference>
<dbReference type="GO" id="GO:0046933">
    <property type="term" value="F:proton-transporting ATP synthase activity, rotational mechanism"/>
    <property type="evidence" value="ECO:0007669"/>
    <property type="project" value="UniProtKB-UniRule"/>
</dbReference>
<dbReference type="GO" id="GO:0046961">
    <property type="term" value="F:proton-transporting ATPase activity, rotational mechanism"/>
    <property type="evidence" value="ECO:0007669"/>
    <property type="project" value="InterPro"/>
</dbReference>
<dbReference type="GO" id="GO:0042777">
    <property type="term" value="P:proton motive force-driven plasma membrane ATP synthesis"/>
    <property type="evidence" value="ECO:0007669"/>
    <property type="project" value="UniProtKB-UniRule"/>
</dbReference>
<dbReference type="FunFam" id="1.10.287.3240:FF:000007">
    <property type="entry name" value="V-type ATP synthase subunit D"/>
    <property type="match status" value="1"/>
</dbReference>
<dbReference type="Gene3D" id="1.10.287.3240">
    <property type="match status" value="1"/>
</dbReference>
<dbReference type="HAMAP" id="MF_00271">
    <property type="entry name" value="ATP_synth_D_arch"/>
    <property type="match status" value="1"/>
</dbReference>
<dbReference type="InterPro" id="IPR002699">
    <property type="entry name" value="V_ATPase_D"/>
</dbReference>
<dbReference type="NCBIfam" id="NF001545">
    <property type="entry name" value="PRK00373.1-4"/>
    <property type="match status" value="1"/>
</dbReference>
<dbReference type="NCBIfam" id="TIGR00309">
    <property type="entry name" value="V_ATPase_subD"/>
    <property type="match status" value="1"/>
</dbReference>
<dbReference type="PANTHER" id="PTHR11671">
    <property type="entry name" value="V-TYPE ATP SYNTHASE SUBUNIT D"/>
    <property type="match status" value="1"/>
</dbReference>
<dbReference type="Pfam" id="PF01813">
    <property type="entry name" value="ATP-synt_D"/>
    <property type="match status" value="1"/>
</dbReference>
<comment type="function">
    <text evidence="1">Component of the A-type ATP synthase that produces ATP from ADP in the presence of a proton gradient across the membrane.</text>
</comment>
<comment type="subunit">
    <text evidence="1">Has multiple subunits with at least A(3), B(3), C, D, E, F, H, I and proteolipid K(x).</text>
</comment>
<comment type="subcellular location">
    <subcellularLocation>
        <location evidence="1">Cell membrane</location>
        <topology evidence="1">Peripheral membrane protein</topology>
    </subcellularLocation>
</comment>
<comment type="similarity">
    <text evidence="1">Belongs to the V-ATPase D subunit family.</text>
</comment>
<organism>
    <name type="scientific">Methanococcus maripaludis (strain C7 / ATCC BAA-1331)</name>
    <dbReference type="NCBI Taxonomy" id="426368"/>
    <lineage>
        <taxon>Archaea</taxon>
        <taxon>Methanobacteriati</taxon>
        <taxon>Methanobacteriota</taxon>
        <taxon>Methanomada group</taxon>
        <taxon>Methanococci</taxon>
        <taxon>Methanococcales</taxon>
        <taxon>Methanococcaceae</taxon>
        <taxon>Methanococcus</taxon>
    </lineage>
</organism>
<feature type="chain" id="PRO_1000059165" description="A-type ATP synthase subunit D">
    <location>
        <begin position="1"/>
        <end position="214"/>
    </location>
</feature>
<accession>A6VFZ4</accession>
<keyword id="KW-0066">ATP synthesis</keyword>
<keyword id="KW-1003">Cell membrane</keyword>
<keyword id="KW-0375">Hydrogen ion transport</keyword>
<keyword id="KW-0406">Ion transport</keyword>
<keyword id="KW-0472">Membrane</keyword>
<keyword id="KW-0813">Transport</keyword>
<reference key="1">
    <citation type="submission" date="2007-06" db="EMBL/GenBank/DDBJ databases">
        <title>Complete sequence of Methanococcus maripaludis C7.</title>
        <authorList>
            <consortium name="US DOE Joint Genome Institute"/>
            <person name="Copeland A."/>
            <person name="Lucas S."/>
            <person name="Lapidus A."/>
            <person name="Barry K."/>
            <person name="Glavina del Rio T."/>
            <person name="Dalin E."/>
            <person name="Tice H."/>
            <person name="Pitluck S."/>
            <person name="Clum A."/>
            <person name="Schmutz J."/>
            <person name="Larimer F."/>
            <person name="Land M."/>
            <person name="Hauser L."/>
            <person name="Kyrpides N."/>
            <person name="Anderson I."/>
            <person name="Sieprawska-Lupa M."/>
            <person name="Whitman W.B."/>
            <person name="Richardson P."/>
        </authorList>
    </citation>
    <scope>NUCLEOTIDE SEQUENCE [LARGE SCALE GENOMIC DNA]</scope>
    <source>
        <strain>C7 / ATCC BAA-1331</strain>
    </source>
</reference>
<gene>
    <name evidence="1" type="primary">atpD</name>
    <name type="ordered locus">MmarC7_0300</name>
</gene>
<name>AATD_METM7</name>
<protein>
    <recommendedName>
        <fullName evidence="1">A-type ATP synthase subunit D</fullName>
    </recommendedName>
</protein>
<proteinExistence type="inferred from homology"/>
<sequence length="214" mass="24349">MADVNPTRMELLKLKGKIKLAEKGHKLLKQKRDALMMEFFEILDQASGIRDKVNDALSQAYKDLIMAQAVMGTLSVKEASFAAKNDNIDLDVDMRNIMGIDVPVFEISNVKRDISNRGYSPYGVSSKLDEAAKNFEEALELITELAEIETSIKLLAQEIITTKRRVNALEYVVIPKMNATKKYIAMRLEEMERENFFRLKIIKARMDAKEAEEA</sequence>